<dbReference type="EMBL" id="BC103267">
    <property type="protein sequence ID" value="AAI03268.1"/>
    <property type="molecule type" value="mRNA"/>
</dbReference>
<dbReference type="RefSeq" id="NP_001029568.1">
    <property type="nucleotide sequence ID" value="NM_001034396.2"/>
</dbReference>
<dbReference type="SMR" id="Q3ZBJ1"/>
<dbReference type="FunCoup" id="Q3ZBJ1">
    <property type="interactions" value="4076"/>
</dbReference>
<dbReference type="STRING" id="9913.ENSBTAP00000011684"/>
<dbReference type="PaxDb" id="9913-ENSBTAP00000011684"/>
<dbReference type="GeneID" id="510872"/>
<dbReference type="KEGG" id="bta:510872"/>
<dbReference type="CTD" id="22916"/>
<dbReference type="VEuPathDB" id="HostDB:ENSBTAG00000008873"/>
<dbReference type="eggNOG" id="KOG0121">
    <property type="taxonomic scope" value="Eukaryota"/>
</dbReference>
<dbReference type="HOGENOM" id="CLU_070952_2_0_1"/>
<dbReference type="InParanoid" id="Q3ZBJ1"/>
<dbReference type="OMA" id="TKCASPE"/>
<dbReference type="OrthoDB" id="201398at2759"/>
<dbReference type="TreeFam" id="TF313897"/>
<dbReference type="Reactome" id="R-BTA-111367">
    <property type="pathway name" value="SLBP independent Processing of Histone Pre-mRNAs"/>
</dbReference>
<dbReference type="Reactome" id="R-BTA-112382">
    <property type="pathway name" value="Formation of RNA Pol II elongation complex"/>
</dbReference>
<dbReference type="Reactome" id="R-BTA-113418">
    <property type="pathway name" value="Formation of the Early Elongation Complex"/>
</dbReference>
<dbReference type="Reactome" id="R-BTA-159227">
    <property type="pathway name" value="Transport of the SLBP independent Mature mRNA"/>
</dbReference>
<dbReference type="Reactome" id="R-BTA-159230">
    <property type="pathway name" value="Transport of the SLBP Dependant Mature mRNA"/>
</dbReference>
<dbReference type="Reactome" id="R-BTA-159231">
    <property type="pathway name" value="Transport of Mature mRNA Derived from an Intronless Transcript"/>
</dbReference>
<dbReference type="Reactome" id="R-BTA-159236">
    <property type="pathway name" value="Transport of Mature mRNA derived from an Intron-Containing Transcript"/>
</dbReference>
<dbReference type="Reactome" id="R-BTA-674695">
    <property type="pathway name" value="RNA Polymerase II Pre-transcription Events"/>
</dbReference>
<dbReference type="Reactome" id="R-BTA-6803529">
    <property type="pathway name" value="FGFR2 alternative splicing"/>
</dbReference>
<dbReference type="Reactome" id="R-BTA-6807505">
    <property type="pathway name" value="RNA polymerase II transcribes snRNA genes"/>
</dbReference>
<dbReference type="Reactome" id="R-BTA-72086">
    <property type="pathway name" value="mRNA Capping"/>
</dbReference>
<dbReference type="Reactome" id="R-BTA-72163">
    <property type="pathway name" value="mRNA Splicing - Major Pathway"/>
</dbReference>
<dbReference type="Reactome" id="R-BTA-72165">
    <property type="pathway name" value="mRNA Splicing - Minor Pathway"/>
</dbReference>
<dbReference type="Reactome" id="R-BTA-72187">
    <property type="pathway name" value="mRNA 3'-end processing"/>
</dbReference>
<dbReference type="Reactome" id="R-BTA-72203">
    <property type="pathway name" value="Processing of Capped Intron-Containing Pre-mRNA"/>
</dbReference>
<dbReference type="Reactome" id="R-BTA-73856">
    <property type="pathway name" value="RNA Polymerase II Transcription Termination"/>
</dbReference>
<dbReference type="Reactome" id="R-BTA-77588">
    <property type="pathway name" value="SLBP Dependent Processing of Replication-Dependent Histone Pre-mRNAs"/>
</dbReference>
<dbReference type="Reactome" id="R-BTA-77595">
    <property type="pathway name" value="Processing of Intronless Pre-mRNAs"/>
</dbReference>
<dbReference type="Reactome" id="R-BTA-975956">
    <property type="pathway name" value="Nonsense Mediated Decay (NMD) independent of the Exon Junction Complex (EJC)"/>
</dbReference>
<dbReference type="Reactome" id="R-BTA-975957">
    <property type="pathway name" value="Nonsense Mediated Decay (NMD) enhanced by the Exon Junction Complex (EJC)"/>
</dbReference>
<dbReference type="Proteomes" id="UP000009136">
    <property type="component" value="Chromosome 1"/>
</dbReference>
<dbReference type="Bgee" id="ENSBTAG00000008873">
    <property type="expression patterns" value="Expressed in myometrium and 107 other cell types or tissues"/>
</dbReference>
<dbReference type="GO" id="GO:0005737">
    <property type="term" value="C:cytoplasm"/>
    <property type="evidence" value="ECO:0000250"/>
    <property type="project" value="UniProtKB"/>
</dbReference>
<dbReference type="GO" id="GO:0005846">
    <property type="term" value="C:nuclear cap binding complex"/>
    <property type="evidence" value="ECO:0000250"/>
    <property type="project" value="UniProtKB"/>
</dbReference>
<dbReference type="GO" id="GO:0005654">
    <property type="term" value="C:nucleoplasm"/>
    <property type="evidence" value="ECO:0000250"/>
    <property type="project" value="UniProtKB"/>
</dbReference>
<dbReference type="GO" id="GO:0003729">
    <property type="term" value="F:mRNA binding"/>
    <property type="evidence" value="ECO:0000250"/>
    <property type="project" value="UniProtKB"/>
</dbReference>
<dbReference type="GO" id="GO:0000340">
    <property type="term" value="F:RNA 7-methylguanosine cap binding"/>
    <property type="evidence" value="ECO:0000250"/>
    <property type="project" value="UniProtKB"/>
</dbReference>
<dbReference type="GO" id="GO:0000339">
    <property type="term" value="F:RNA cap binding"/>
    <property type="evidence" value="ECO:0000318"/>
    <property type="project" value="GO_Central"/>
</dbReference>
<dbReference type="GO" id="GO:0017069">
    <property type="term" value="F:snRNA binding"/>
    <property type="evidence" value="ECO:0000250"/>
    <property type="project" value="UniProtKB"/>
</dbReference>
<dbReference type="GO" id="GO:0045292">
    <property type="term" value="P:mRNA cis splicing, via spliceosome"/>
    <property type="evidence" value="ECO:0000250"/>
    <property type="project" value="UniProtKB"/>
</dbReference>
<dbReference type="GO" id="GO:0000398">
    <property type="term" value="P:mRNA splicing, via spliceosome"/>
    <property type="evidence" value="ECO:0000318"/>
    <property type="project" value="GO_Central"/>
</dbReference>
<dbReference type="GO" id="GO:0051028">
    <property type="term" value="P:mRNA transport"/>
    <property type="evidence" value="ECO:0007669"/>
    <property type="project" value="UniProtKB-KW"/>
</dbReference>
<dbReference type="GO" id="GO:0000184">
    <property type="term" value="P:nuclear-transcribed mRNA catabolic process, nonsense-mediated decay"/>
    <property type="evidence" value="ECO:0000250"/>
    <property type="project" value="UniProtKB"/>
</dbReference>
<dbReference type="GO" id="GO:0046833">
    <property type="term" value="P:positive regulation of RNA export from nucleus"/>
    <property type="evidence" value="ECO:0000250"/>
    <property type="project" value="UniProtKB"/>
</dbReference>
<dbReference type="GO" id="GO:0006446">
    <property type="term" value="P:regulation of translational initiation"/>
    <property type="evidence" value="ECO:0000250"/>
    <property type="project" value="UniProtKB"/>
</dbReference>
<dbReference type="GO" id="GO:0031047">
    <property type="term" value="P:regulatory ncRNA-mediated gene silencing"/>
    <property type="evidence" value="ECO:0007669"/>
    <property type="project" value="UniProtKB-KW"/>
</dbReference>
<dbReference type="GO" id="GO:0008380">
    <property type="term" value="P:RNA splicing"/>
    <property type="evidence" value="ECO:0000250"/>
    <property type="project" value="UniProtKB"/>
</dbReference>
<dbReference type="GO" id="GO:0006408">
    <property type="term" value="P:snRNA export from nucleus"/>
    <property type="evidence" value="ECO:0000250"/>
    <property type="project" value="UniProtKB"/>
</dbReference>
<dbReference type="CDD" id="cd12240">
    <property type="entry name" value="RRM_NCBP2"/>
    <property type="match status" value="1"/>
</dbReference>
<dbReference type="FunFam" id="3.30.70.330:FF:000128">
    <property type="entry name" value="Nuclear cap-binding protein subunit 2"/>
    <property type="match status" value="1"/>
</dbReference>
<dbReference type="Gene3D" id="3.30.70.330">
    <property type="match status" value="1"/>
</dbReference>
<dbReference type="InterPro" id="IPR027157">
    <property type="entry name" value="NCBP2"/>
</dbReference>
<dbReference type="InterPro" id="IPR034148">
    <property type="entry name" value="NCBP2_RRM"/>
</dbReference>
<dbReference type="InterPro" id="IPR012677">
    <property type="entry name" value="Nucleotide-bd_a/b_plait_sf"/>
</dbReference>
<dbReference type="InterPro" id="IPR035979">
    <property type="entry name" value="RBD_domain_sf"/>
</dbReference>
<dbReference type="InterPro" id="IPR000504">
    <property type="entry name" value="RRM_dom"/>
</dbReference>
<dbReference type="PANTHER" id="PTHR18847">
    <property type="entry name" value="20 KD NUCLEAR CAP BINDING PROTEIN"/>
    <property type="match status" value="1"/>
</dbReference>
<dbReference type="PANTHER" id="PTHR18847:SF0">
    <property type="entry name" value="NUCLEAR CAP-BINDING PROTEIN SUBUNIT 2"/>
    <property type="match status" value="1"/>
</dbReference>
<dbReference type="Pfam" id="PF00076">
    <property type="entry name" value="RRM_1"/>
    <property type="match status" value="1"/>
</dbReference>
<dbReference type="SMART" id="SM00360">
    <property type="entry name" value="RRM"/>
    <property type="match status" value="1"/>
</dbReference>
<dbReference type="SUPFAM" id="SSF54928">
    <property type="entry name" value="RNA-binding domain, RBD"/>
    <property type="match status" value="1"/>
</dbReference>
<dbReference type="PROSITE" id="PS50102">
    <property type="entry name" value="RRM"/>
    <property type="match status" value="1"/>
</dbReference>
<feature type="initiator methionine" description="Removed" evidence="2">
    <location>
        <position position="1"/>
    </location>
</feature>
<feature type="chain" id="PRO_0000232991" description="Nuclear cap-binding protein subunit 2">
    <location>
        <begin position="2"/>
        <end position="156"/>
    </location>
</feature>
<feature type="domain" description="RRM" evidence="3">
    <location>
        <begin position="40"/>
        <end position="118"/>
    </location>
</feature>
<feature type="region of interest" description="Disordered" evidence="4">
    <location>
        <begin position="124"/>
        <end position="156"/>
    </location>
</feature>
<feature type="compositionally biased region" description="Basic and acidic residues" evidence="4">
    <location>
        <begin position="134"/>
        <end position="144"/>
    </location>
</feature>
<feature type="binding site" evidence="1">
    <location>
        <position position="20"/>
    </location>
    <ligand>
        <name>mRNA</name>
        <dbReference type="ChEBI" id="CHEBI:33699"/>
    </ligand>
    <ligandPart>
        <name>mRNA cap</name>
    </ligandPart>
</feature>
<feature type="binding site" evidence="1">
    <location>
        <position position="43"/>
    </location>
    <ligand>
        <name>mRNA</name>
        <dbReference type="ChEBI" id="CHEBI:33699"/>
    </ligand>
    <ligandPart>
        <name>mRNA cap</name>
    </ligandPart>
</feature>
<feature type="binding site" evidence="1">
    <location>
        <begin position="112"/>
        <end position="116"/>
    </location>
    <ligand>
        <name>mRNA</name>
        <dbReference type="ChEBI" id="CHEBI:33699"/>
    </ligand>
    <ligandPart>
        <name>mRNA cap</name>
    </ligandPart>
</feature>
<feature type="binding site" evidence="1">
    <location>
        <begin position="123"/>
        <end position="127"/>
    </location>
    <ligand>
        <name>mRNA</name>
        <dbReference type="ChEBI" id="CHEBI:33699"/>
    </ligand>
    <ligandPart>
        <name>mRNA cap</name>
    </ligandPart>
</feature>
<feature type="binding site" evidence="1">
    <location>
        <begin position="133"/>
        <end position="134"/>
    </location>
    <ligand>
        <name>mRNA</name>
        <dbReference type="ChEBI" id="CHEBI:33699"/>
    </ligand>
    <ligandPart>
        <name>mRNA cap</name>
    </ligandPart>
</feature>
<feature type="modified residue" description="N-acetylserine" evidence="2">
    <location>
        <position position="2"/>
    </location>
</feature>
<feature type="modified residue" description="Phosphoserine" evidence="2">
    <location>
        <position position="13"/>
    </location>
</feature>
<feature type="modified residue" description="Phosphoserine" evidence="2">
    <location>
        <position position="18"/>
    </location>
</feature>
<feature type="modified residue" description="Omega-N-methylarginine" evidence="2">
    <location>
        <position position="146"/>
    </location>
</feature>
<name>NCBP2_BOVIN</name>
<accession>Q3ZBJ1</accession>
<organism>
    <name type="scientific">Bos taurus</name>
    <name type="common">Bovine</name>
    <dbReference type="NCBI Taxonomy" id="9913"/>
    <lineage>
        <taxon>Eukaryota</taxon>
        <taxon>Metazoa</taxon>
        <taxon>Chordata</taxon>
        <taxon>Craniata</taxon>
        <taxon>Vertebrata</taxon>
        <taxon>Euteleostomi</taxon>
        <taxon>Mammalia</taxon>
        <taxon>Eutheria</taxon>
        <taxon>Laurasiatheria</taxon>
        <taxon>Artiodactyla</taxon>
        <taxon>Ruminantia</taxon>
        <taxon>Pecora</taxon>
        <taxon>Bovidae</taxon>
        <taxon>Bovinae</taxon>
        <taxon>Bos</taxon>
    </lineage>
</organism>
<reference key="1">
    <citation type="submission" date="2005-08" db="EMBL/GenBank/DDBJ databases">
        <authorList>
            <consortium name="NIH - Mammalian Gene Collection (MGC) project"/>
        </authorList>
    </citation>
    <scope>NUCLEOTIDE SEQUENCE [LARGE SCALE MRNA]</scope>
    <source>
        <strain>Hereford</strain>
        <tissue>Rumen</tissue>
    </source>
</reference>
<sequence>MSGGLLKALRSDSYVELSQYRDQHFRGDNEEQEKLLKKSCTLYVGNLSFYTTEEQIYELFSKSGDIKKIIMGLDKMKKTACGFCFVEYYSRADAENAMRYINGTRLDDRIIRTDWDAGFKEGRQYGRGRSGGQVRDEYRQDYDAGRGGYGKLAQNQ</sequence>
<gene>
    <name type="primary">NCBP2</name>
    <name type="synonym">CBP20</name>
</gene>
<proteinExistence type="evidence at transcript level"/>
<keyword id="KW-0007">Acetylation</keyword>
<keyword id="KW-0963">Cytoplasm</keyword>
<keyword id="KW-0488">Methylation</keyword>
<keyword id="KW-0507">mRNA processing</keyword>
<keyword id="KW-0508">mRNA splicing</keyword>
<keyword id="KW-0509">mRNA transport</keyword>
<keyword id="KW-0866">Nonsense-mediated mRNA decay</keyword>
<keyword id="KW-0539">Nucleus</keyword>
<keyword id="KW-0597">Phosphoprotein</keyword>
<keyword id="KW-1185">Reference proteome</keyword>
<keyword id="KW-0694">RNA-binding</keyword>
<keyword id="KW-0943">RNA-mediated gene silencing</keyword>
<keyword id="KW-0810">Translation regulation</keyword>
<keyword id="KW-0813">Transport</keyword>
<comment type="function">
    <text evidence="2">Component of the cap-binding complex (CBC), which binds co-transcriptionally to the 5' cap of pre-mRNAs and is involved in various processes such as pre-mRNA splicing, translation regulation, nonsense-mediated mRNA decay, RNA-mediated gene silencing (RNAi) by microRNAs (miRNAs) and mRNA export. The CBC complex is involved in mRNA export from the nucleus via its interaction with ALYREF/THOC4/ALY, leading to the recruitment of the mRNA export machinery to the 5' end of mRNA and to mRNA export in a 5' to 3' direction through the nuclear pore. The CBC complex is also involved in mediating U snRNA and intronless mRNAs export from the nucleus. The CBC complex is essential for a pioneer round of mRNA translation, before steady state translation when the CBC complex is replaced by cytoplasmic cap-binding protein eIF4E. The pioneer round of mRNA translation mediated by the CBC complex plays a central role in nonsense-mediated mRNA decay (NMD), NMD only taking place in mRNAs bound to the CBC complex, but not on eIF4E-bound mRNAs. The CBC complex enhances NMD in mRNAs containing at least one exon-junction complex (EJC) via its interaction with UPF1, promoting the interaction between UPF1 and UPF2. The CBC complex is also involved in 'failsafe' NMD, which is independent of the EJC complex, while it does not participate in Staufen-mediated mRNA decay (SMD). During cell proliferation, the CBC complex is also involved in microRNAs (miRNAs) biogenesis via its interaction with SRRT/ARS2, thereby being required for miRNA-mediated RNA interference. The CBC complex also acts as a negative regulator of PARN, thereby acting as an inhibitor of mRNA deadenylation. In the CBC complex, NCBP2/CBP20 recognizes and binds capped RNAs (m7GpppG-capped RNA) but requires NCBP1/CBP80 to stabilize the movement of its N-terminal loop and lock the CBC into a high affinity cap-binding state with the cap structure. The conventional cap-binding complex with NCBP2 binds both small nuclear RNA (snRNA) and messenger (mRNA) and is involved in their export from the nucleus (By similarity).</text>
</comment>
<comment type="subunit">
    <text evidence="2">Component of the nuclear cap-binding complex (CBC), a heterodimer composed of NCBP1/CBP80 and NCBP2/CBP20 that interacts with m7GpppG-capped RNA. Found in a U snRNA export complex with PHAX/RNUXA, NCBP1/CBP80, NCBP2/CBP20, RAN, XPO1 and m7G-capped RNA. Interacts with PHAX/RNUXA, EIF4G1, HNRNPF, HNRNPH1 and ALYREF/THOC4/ALY. Interacts with SRRT/ARS2 and KPNA3 (By similarity).</text>
</comment>
<comment type="subcellular location">
    <subcellularLocation>
        <location evidence="2">Nucleus</location>
    </subcellularLocation>
    <subcellularLocation>
        <location evidence="2">Cytoplasm</location>
    </subcellularLocation>
</comment>
<comment type="similarity">
    <text evidence="5">Belongs to the RRM NCBP2 family.</text>
</comment>
<protein>
    <recommendedName>
        <fullName>Nuclear cap-binding protein subunit 2</fullName>
    </recommendedName>
    <alternativeName>
        <fullName>20 kDa nuclear cap-binding protein</fullName>
    </alternativeName>
    <alternativeName>
        <fullName>NCBP 20 kDa subunit</fullName>
        <shortName>CBP20</shortName>
    </alternativeName>
</protein>
<evidence type="ECO:0000250" key="1"/>
<evidence type="ECO:0000250" key="2">
    <source>
        <dbReference type="UniProtKB" id="P52298"/>
    </source>
</evidence>
<evidence type="ECO:0000255" key="3">
    <source>
        <dbReference type="PROSITE-ProRule" id="PRU00176"/>
    </source>
</evidence>
<evidence type="ECO:0000256" key="4">
    <source>
        <dbReference type="SAM" id="MobiDB-lite"/>
    </source>
</evidence>
<evidence type="ECO:0000305" key="5"/>